<organism>
    <name type="scientific">Salmonella enteritidis PT4 (strain P125109)</name>
    <dbReference type="NCBI Taxonomy" id="550537"/>
    <lineage>
        <taxon>Bacteria</taxon>
        <taxon>Pseudomonadati</taxon>
        <taxon>Pseudomonadota</taxon>
        <taxon>Gammaproteobacteria</taxon>
        <taxon>Enterobacterales</taxon>
        <taxon>Enterobacteriaceae</taxon>
        <taxon>Salmonella</taxon>
    </lineage>
</organism>
<comment type="function">
    <text evidence="1">Specifically methylates the cytosine at position 1962 (m5C1962) of 23S rRNA.</text>
</comment>
<comment type="catalytic activity">
    <reaction evidence="1">
        <text>cytidine(1962) in 23S rRNA + S-adenosyl-L-methionine = 5-methylcytidine(1962) in 23S rRNA + S-adenosyl-L-homocysteine + H(+)</text>
        <dbReference type="Rhea" id="RHEA:42912"/>
        <dbReference type="Rhea" id="RHEA-COMP:10382"/>
        <dbReference type="Rhea" id="RHEA-COMP:10386"/>
        <dbReference type="ChEBI" id="CHEBI:15378"/>
        <dbReference type="ChEBI" id="CHEBI:57856"/>
        <dbReference type="ChEBI" id="CHEBI:59789"/>
        <dbReference type="ChEBI" id="CHEBI:74483"/>
        <dbReference type="ChEBI" id="CHEBI:82748"/>
        <dbReference type="EC" id="2.1.1.191"/>
    </reaction>
</comment>
<comment type="subcellular location">
    <subcellularLocation>
        <location evidence="1">Cytoplasm</location>
    </subcellularLocation>
</comment>
<comment type="similarity">
    <text evidence="1">Belongs to the methyltransferase superfamily. RlmI family.</text>
</comment>
<accession>B5QZH0</accession>
<gene>
    <name evidence="1" type="primary">rlmI</name>
    <name type="ordered locus">SEN0945</name>
</gene>
<evidence type="ECO:0000255" key="1">
    <source>
        <dbReference type="HAMAP-Rule" id="MF_01857"/>
    </source>
</evidence>
<sequence>MTESTFPQYPRLVLSKGREKSLLRRHPWVFSGAVSRLEGKANLGETIDIVDHQGKWLARGAWSPASQIRARVWTFDKAESIDIAFFTRRLRQAQQWRDWLAKKDGLDSYRLIAGESDGLPGVTIDRFGHFLVLQLLSAGAEYQRAALISALQTCDPDCAIYDRSDVAVRKKEGMALTQGPVTGELPPALLPIEEHGMKLLVDIQGGHKTGYYLDQRDSRLATRRYVENQRVLNCFSYTGGFAVSALMGGCRQVVSVDTSQDALDIARQNVELNQLDLSKAEFVRDDVFKLLRAYREHGEKFDVIIMDPPKFVENKSQLMGACRGYKDINMLAIQLLNPGGILLTFSCSGLMTSDLFQKIIADAAIDAGRDVQFIEQFRQAADHPVIATYPEGLYLKGFACRVM</sequence>
<name>RLMI_SALEP</name>
<feature type="chain" id="PRO_0000366243" description="Ribosomal RNA large subunit methyltransferase I">
    <location>
        <begin position="1"/>
        <end position="403"/>
    </location>
</feature>
<feature type="domain" description="PUA" evidence="1">
    <location>
        <begin position="9"/>
        <end position="88"/>
    </location>
</feature>
<dbReference type="EC" id="2.1.1.191" evidence="1"/>
<dbReference type="EMBL" id="AM933172">
    <property type="protein sequence ID" value="CAR32528.1"/>
    <property type="molecule type" value="Genomic_DNA"/>
</dbReference>
<dbReference type="RefSeq" id="WP_000140478.1">
    <property type="nucleotide sequence ID" value="NC_011294.1"/>
</dbReference>
<dbReference type="SMR" id="B5QZH0"/>
<dbReference type="KEGG" id="set:SEN0945"/>
<dbReference type="HOGENOM" id="CLU_014042_0_0_6"/>
<dbReference type="Proteomes" id="UP000000613">
    <property type="component" value="Chromosome"/>
</dbReference>
<dbReference type="GO" id="GO:0005737">
    <property type="term" value="C:cytoplasm"/>
    <property type="evidence" value="ECO:0007669"/>
    <property type="project" value="UniProtKB-SubCell"/>
</dbReference>
<dbReference type="GO" id="GO:0003723">
    <property type="term" value="F:RNA binding"/>
    <property type="evidence" value="ECO:0007669"/>
    <property type="project" value="UniProtKB-KW"/>
</dbReference>
<dbReference type="GO" id="GO:0016434">
    <property type="term" value="F:rRNA (cytosine) methyltransferase activity"/>
    <property type="evidence" value="ECO:0007669"/>
    <property type="project" value="UniProtKB-UniRule"/>
</dbReference>
<dbReference type="CDD" id="cd02440">
    <property type="entry name" value="AdoMet_MTases"/>
    <property type="match status" value="1"/>
</dbReference>
<dbReference type="CDD" id="cd21153">
    <property type="entry name" value="PUA_RlmI"/>
    <property type="match status" value="1"/>
</dbReference>
<dbReference type="CDD" id="cd11572">
    <property type="entry name" value="RlmI_M_like"/>
    <property type="match status" value="1"/>
</dbReference>
<dbReference type="FunFam" id="3.40.50.150:FF:000044">
    <property type="entry name" value="Ribosomal RNA large subunit methyltransferase I"/>
    <property type="match status" value="1"/>
</dbReference>
<dbReference type="Gene3D" id="2.30.130.10">
    <property type="entry name" value="PUA domain"/>
    <property type="match status" value="1"/>
</dbReference>
<dbReference type="Gene3D" id="3.30.750.80">
    <property type="entry name" value="RNA methyltransferase domain (HRMD) like"/>
    <property type="match status" value="1"/>
</dbReference>
<dbReference type="Gene3D" id="3.40.50.150">
    <property type="entry name" value="Vaccinia Virus protein VP39"/>
    <property type="match status" value="1"/>
</dbReference>
<dbReference type="HAMAP" id="MF_01857">
    <property type="entry name" value="23SrRNA_methyltr_I"/>
    <property type="match status" value="1"/>
</dbReference>
<dbReference type="InterPro" id="IPR002478">
    <property type="entry name" value="PUA"/>
</dbReference>
<dbReference type="InterPro" id="IPR015947">
    <property type="entry name" value="PUA-like_sf"/>
</dbReference>
<dbReference type="InterPro" id="IPR036974">
    <property type="entry name" value="PUA_sf"/>
</dbReference>
<dbReference type="InterPro" id="IPR023542">
    <property type="entry name" value="RLMI"/>
</dbReference>
<dbReference type="InterPro" id="IPR041532">
    <property type="entry name" value="RlmI-like_PUA"/>
</dbReference>
<dbReference type="InterPro" id="IPR019614">
    <property type="entry name" value="SAM-dep_methyl-trfase"/>
</dbReference>
<dbReference type="InterPro" id="IPR029063">
    <property type="entry name" value="SAM-dependent_MTases_sf"/>
</dbReference>
<dbReference type="NCBIfam" id="NF011707">
    <property type="entry name" value="PRK15128.1"/>
    <property type="match status" value="1"/>
</dbReference>
<dbReference type="PANTHER" id="PTHR42873">
    <property type="entry name" value="RIBOSOMAL RNA LARGE SUBUNIT METHYLTRANSFERASE"/>
    <property type="match status" value="1"/>
</dbReference>
<dbReference type="PANTHER" id="PTHR42873:SF1">
    <property type="entry name" value="S-ADENOSYLMETHIONINE-DEPENDENT METHYLTRANSFERASE DOMAIN-CONTAINING PROTEIN"/>
    <property type="match status" value="1"/>
</dbReference>
<dbReference type="Pfam" id="PF10672">
    <property type="entry name" value="Methyltrans_SAM"/>
    <property type="match status" value="1"/>
</dbReference>
<dbReference type="Pfam" id="PF17785">
    <property type="entry name" value="PUA_3"/>
    <property type="match status" value="1"/>
</dbReference>
<dbReference type="SMART" id="SM00359">
    <property type="entry name" value="PUA"/>
    <property type="match status" value="1"/>
</dbReference>
<dbReference type="SUPFAM" id="SSF88697">
    <property type="entry name" value="PUA domain-like"/>
    <property type="match status" value="1"/>
</dbReference>
<dbReference type="SUPFAM" id="SSF53335">
    <property type="entry name" value="S-adenosyl-L-methionine-dependent methyltransferases"/>
    <property type="match status" value="1"/>
</dbReference>
<dbReference type="PROSITE" id="PS50890">
    <property type="entry name" value="PUA"/>
    <property type="match status" value="1"/>
</dbReference>
<proteinExistence type="inferred from homology"/>
<protein>
    <recommendedName>
        <fullName evidence="1">Ribosomal RNA large subunit methyltransferase I</fullName>
        <ecNumber evidence="1">2.1.1.191</ecNumber>
    </recommendedName>
    <alternativeName>
        <fullName evidence="1">23S rRNA m5C1962 methyltransferase</fullName>
    </alternativeName>
    <alternativeName>
        <fullName evidence="1">rRNA (cytosine-C(5)-)-methyltransferase RlmI</fullName>
    </alternativeName>
</protein>
<reference key="1">
    <citation type="journal article" date="2008" name="Genome Res.">
        <title>Comparative genome analysis of Salmonella enteritidis PT4 and Salmonella gallinarum 287/91 provides insights into evolutionary and host adaptation pathways.</title>
        <authorList>
            <person name="Thomson N.R."/>
            <person name="Clayton D.J."/>
            <person name="Windhorst D."/>
            <person name="Vernikos G."/>
            <person name="Davidson S."/>
            <person name="Churcher C."/>
            <person name="Quail M.A."/>
            <person name="Stevens M."/>
            <person name="Jones M.A."/>
            <person name="Watson M."/>
            <person name="Barron A."/>
            <person name="Layton A."/>
            <person name="Pickard D."/>
            <person name="Kingsley R.A."/>
            <person name="Bignell A."/>
            <person name="Clark L."/>
            <person name="Harris B."/>
            <person name="Ormond D."/>
            <person name="Abdellah Z."/>
            <person name="Brooks K."/>
            <person name="Cherevach I."/>
            <person name="Chillingworth T."/>
            <person name="Woodward J."/>
            <person name="Norberczak H."/>
            <person name="Lord A."/>
            <person name="Arrowsmith C."/>
            <person name="Jagels K."/>
            <person name="Moule S."/>
            <person name="Mungall K."/>
            <person name="Saunders M."/>
            <person name="Whitehead S."/>
            <person name="Chabalgoity J.A."/>
            <person name="Maskell D."/>
            <person name="Humphreys T."/>
            <person name="Roberts M."/>
            <person name="Barrow P.A."/>
            <person name="Dougan G."/>
            <person name="Parkhill J."/>
        </authorList>
    </citation>
    <scope>NUCLEOTIDE SEQUENCE [LARGE SCALE GENOMIC DNA]</scope>
    <source>
        <strain>P125109</strain>
    </source>
</reference>
<keyword id="KW-0963">Cytoplasm</keyword>
<keyword id="KW-0489">Methyltransferase</keyword>
<keyword id="KW-0694">RNA-binding</keyword>
<keyword id="KW-0698">rRNA processing</keyword>
<keyword id="KW-0949">S-adenosyl-L-methionine</keyword>
<keyword id="KW-0808">Transferase</keyword>